<dbReference type="EC" id="2.7.7.8" evidence="1"/>
<dbReference type="EMBL" id="AE013218">
    <property type="protein sequence ID" value="AAM67914.1"/>
    <property type="molecule type" value="Genomic_DNA"/>
</dbReference>
<dbReference type="RefSeq" id="WP_011053881.1">
    <property type="nucleotide sequence ID" value="NC_004061.1"/>
</dbReference>
<dbReference type="SMR" id="Q8K9H5"/>
<dbReference type="STRING" id="198804.BUsg_361"/>
<dbReference type="GeneID" id="93003831"/>
<dbReference type="KEGG" id="bas:BUsg_361"/>
<dbReference type="eggNOG" id="COG1185">
    <property type="taxonomic scope" value="Bacteria"/>
</dbReference>
<dbReference type="HOGENOM" id="CLU_004217_2_2_6"/>
<dbReference type="Proteomes" id="UP000000416">
    <property type="component" value="Chromosome"/>
</dbReference>
<dbReference type="GO" id="GO:0005829">
    <property type="term" value="C:cytosol"/>
    <property type="evidence" value="ECO:0007669"/>
    <property type="project" value="TreeGrafter"/>
</dbReference>
<dbReference type="GO" id="GO:0000175">
    <property type="term" value="F:3'-5'-RNA exonuclease activity"/>
    <property type="evidence" value="ECO:0007669"/>
    <property type="project" value="TreeGrafter"/>
</dbReference>
<dbReference type="GO" id="GO:0000287">
    <property type="term" value="F:magnesium ion binding"/>
    <property type="evidence" value="ECO:0007669"/>
    <property type="project" value="UniProtKB-UniRule"/>
</dbReference>
<dbReference type="GO" id="GO:0004654">
    <property type="term" value="F:polyribonucleotide nucleotidyltransferase activity"/>
    <property type="evidence" value="ECO:0007669"/>
    <property type="project" value="UniProtKB-UniRule"/>
</dbReference>
<dbReference type="GO" id="GO:0003723">
    <property type="term" value="F:RNA binding"/>
    <property type="evidence" value="ECO:0007669"/>
    <property type="project" value="UniProtKB-UniRule"/>
</dbReference>
<dbReference type="GO" id="GO:0006402">
    <property type="term" value="P:mRNA catabolic process"/>
    <property type="evidence" value="ECO:0007669"/>
    <property type="project" value="UniProtKB-UniRule"/>
</dbReference>
<dbReference type="GO" id="GO:0006396">
    <property type="term" value="P:RNA processing"/>
    <property type="evidence" value="ECO:0007669"/>
    <property type="project" value="InterPro"/>
</dbReference>
<dbReference type="CDD" id="cd02393">
    <property type="entry name" value="KH-I_PNPase"/>
    <property type="match status" value="1"/>
</dbReference>
<dbReference type="CDD" id="cd11363">
    <property type="entry name" value="RNase_PH_PNPase_1"/>
    <property type="match status" value="1"/>
</dbReference>
<dbReference type="CDD" id="cd11364">
    <property type="entry name" value="RNase_PH_PNPase_2"/>
    <property type="match status" value="1"/>
</dbReference>
<dbReference type="CDD" id="cd04472">
    <property type="entry name" value="S1_PNPase"/>
    <property type="match status" value="1"/>
</dbReference>
<dbReference type="FunFam" id="2.40.50.140:FF:000023">
    <property type="entry name" value="Polyribonucleotide nucleotidyltransferase"/>
    <property type="match status" value="1"/>
</dbReference>
<dbReference type="FunFam" id="3.30.1370.10:FF:000001">
    <property type="entry name" value="Polyribonucleotide nucleotidyltransferase"/>
    <property type="match status" value="1"/>
</dbReference>
<dbReference type="FunFam" id="3.30.230.70:FF:000001">
    <property type="entry name" value="Polyribonucleotide nucleotidyltransferase"/>
    <property type="match status" value="1"/>
</dbReference>
<dbReference type="FunFam" id="3.30.230.70:FF:000002">
    <property type="entry name" value="Polyribonucleotide nucleotidyltransferase"/>
    <property type="match status" value="1"/>
</dbReference>
<dbReference type="Gene3D" id="3.30.230.70">
    <property type="entry name" value="GHMP Kinase, N-terminal domain"/>
    <property type="match status" value="2"/>
</dbReference>
<dbReference type="Gene3D" id="3.30.1370.10">
    <property type="entry name" value="K Homology domain, type 1"/>
    <property type="match status" value="1"/>
</dbReference>
<dbReference type="Gene3D" id="2.40.50.140">
    <property type="entry name" value="Nucleic acid-binding proteins"/>
    <property type="match status" value="1"/>
</dbReference>
<dbReference type="HAMAP" id="MF_01595">
    <property type="entry name" value="PNPase"/>
    <property type="match status" value="1"/>
</dbReference>
<dbReference type="InterPro" id="IPR001247">
    <property type="entry name" value="ExoRNase_PH_dom1"/>
</dbReference>
<dbReference type="InterPro" id="IPR015847">
    <property type="entry name" value="ExoRNase_PH_dom2"/>
</dbReference>
<dbReference type="InterPro" id="IPR036345">
    <property type="entry name" value="ExoRNase_PH_dom2_sf"/>
</dbReference>
<dbReference type="InterPro" id="IPR004087">
    <property type="entry name" value="KH_dom"/>
</dbReference>
<dbReference type="InterPro" id="IPR004088">
    <property type="entry name" value="KH_dom_type_1"/>
</dbReference>
<dbReference type="InterPro" id="IPR036612">
    <property type="entry name" value="KH_dom_type_1_sf"/>
</dbReference>
<dbReference type="InterPro" id="IPR012340">
    <property type="entry name" value="NA-bd_OB-fold"/>
</dbReference>
<dbReference type="InterPro" id="IPR012162">
    <property type="entry name" value="PNPase"/>
</dbReference>
<dbReference type="InterPro" id="IPR027408">
    <property type="entry name" value="PNPase/RNase_PH_dom_sf"/>
</dbReference>
<dbReference type="InterPro" id="IPR015848">
    <property type="entry name" value="PNPase_PH_RNA-bd_bac/org-type"/>
</dbReference>
<dbReference type="InterPro" id="IPR036456">
    <property type="entry name" value="PNPase_PH_RNA-bd_sf"/>
</dbReference>
<dbReference type="InterPro" id="IPR020568">
    <property type="entry name" value="Ribosomal_Su5_D2-typ_SF"/>
</dbReference>
<dbReference type="InterPro" id="IPR003029">
    <property type="entry name" value="S1_domain"/>
</dbReference>
<dbReference type="NCBIfam" id="TIGR03591">
    <property type="entry name" value="polynuc_phos"/>
    <property type="match status" value="1"/>
</dbReference>
<dbReference type="NCBIfam" id="NF008805">
    <property type="entry name" value="PRK11824.1"/>
    <property type="match status" value="1"/>
</dbReference>
<dbReference type="PANTHER" id="PTHR11252">
    <property type="entry name" value="POLYRIBONUCLEOTIDE NUCLEOTIDYLTRANSFERASE"/>
    <property type="match status" value="1"/>
</dbReference>
<dbReference type="PANTHER" id="PTHR11252:SF0">
    <property type="entry name" value="POLYRIBONUCLEOTIDE NUCLEOTIDYLTRANSFERASE 1, MITOCHONDRIAL"/>
    <property type="match status" value="1"/>
</dbReference>
<dbReference type="Pfam" id="PF00013">
    <property type="entry name" value="KH_1"/>
    <property type="match status" value="1"/>
</dbReference>
<dbReference type="Pfam" id="PF03726">
    <property type="entry name" value="PNPase"/>
    <property type="match status" value="1"/>
</dbReference>
<dbReference type="Pfam" id="PF01138">
    <property type="entry name" value="RNase_PH"/>
    <property type="match status" value="2"/>
</dbReference>
<dbReference type="Pfam" id="PF03725">
    <property type="entry name" value="RNase_PH_C"/>
    <property type="match status" value="2"/>
</dbReference>
<dbReference type="Pfam" id="PF00575">
    <property type="entry name" value="S1"/>
    <property type="match status" value="1"/>
</dbReference>
<dbReference type="PIRSF" id="PIRSF005499">
    <property type="entry name" value="PNPase"/>
    <property type="match status" value="1"/>
</dbReference>
<dbReference type="SMART" id="SM00322">
    <property type="entry name" value="KH"/>
    <property type="match status" value="1"/>
</dbReference>
<dbReference type="SMART" id="SM00316">
    <property type="entry name" value="S1"/>
    <property type="match status" value="1"/>
</dbReference>
<dbReference type="SUPFAM" id="SSF54791">
    <property type="entry name" value="Eukaryotic type KH-domain (KH-domain type I)"/>
    <property type="match status" value="1"/>
</dbReference>
<dbReference type="SUPFAM" id="SSF50249">
    <property type="entry name" value="Nucleic acid-binding proteins"/>
    <property type="match status" value="1"/>
</dbReference>
<dbReference type="SUPFAM" id="SSF46915">
    <property type="entry name" value="Polynucleotide phosphorylase/guanosine pentaphosphate synthase (PNPase/GPSI), domain 3"/>
    <property type="match status" value="1"/>
</dbReference>
<dbReference type="SUPFAM" id="SSF55666">
    <property type="entry name" value="Ribonuclease PH domain 2-like"/>
    <property type="match status" value="2"/>
</dbReference>
<dbReference type="SUPFAM" id="SSF54211">
    <property type="entry name" value="Ribosomal protein S5 domain 2-like"/>
    <property type="match status" value="2"/>
</dbReference>
<dbReference type="PROSITE" id="PS50084">
    <property type="entry name" value="KH_TYPE_1"/>
    <property type="match status" value="1"/>
</dbReference>
<dbReference type="PROSITE" id="PS50126">
    <property type="entry name" value="S1"/>
    <property type="match status" value="1"/>
</dbReference>
<feature type="chain" id="PRO_0000197911" description="Polyribonucleotide nucleotidyltransferase">
    <location>
        <begin position="1"/>
        <end position="707"/>
    </location>
</feature>
<feature type="domain" description="KH" evidence="1">
    <location>
        <begin position="553"/>
        <end position="612"/>
    </location>
</feature>
<feature type="domain" description="S1 motif" evidence="1">
    <location>
        <begin position="622"/>
        <end position="690"/>
    </location>
</feature>
<feature type="binding site" evidence="1">
    <location>
        <position position="486"/>
    </location>
    <ligand>
        <name>Mg(2+)</name>
        <dbReference type="ChEBI" id="CHEBI:18420"/>
    </ligand>
</feature>
<feature type="binding site" evidence="1">
    <location>
        <position position="492"/>
    </location>
    <ligand>
        <name>Mg(2+)</name>
        <dbReference type="ChEBI" id="CHEBI:18420"/>
    </ligand>
</feature>
<reference key="1">
    <citation type="journal article" date="2002" name="Science">
        <title>50 million years of genomic stasis in endosymbiotic bacteria.</title>
        <authorList>
            <person name="Tamas I."/>
            <person name="Klasson L."/>
            <person name="Canbaeck B."/>
            <person name="Naeslund A.K."/>
            <person name="Eriksson A.-S."/>
            <person name="Wernegreen J.J."/>
            <person name="Sandstroem J.P."/>
            <person name="Moran N.A."/>
            <person name="Andersson S.G.E."/>
        </authorList>
    </citation>
    <scope>NUCLEOTIDE SEQUENCE [LARGE SCALE GENOMIC DNA]</scope>
    <source>
        <strain>Sg</strain>
    </source>
</reference>
<keyword id="KW-0963">Cytoplasm</keyword>
<keyword id="KW-0460">Magnesium</keyword>
<keyword id="KW-0479">Metal-binding</keyword>
<keyword id="KW-0548">Nucleotidyltransferase</keyword>
<keyword id="KW-0694">RNA-binding</keyword>
<keyword id="KW-0808">Transferase</keyword>
<protein>
    <recommendedName>
        <fullName evidence="1">Polyribonucleotide nucleotidyltransferase</fullName>
        <ecNumber evidence="1">2.7.7.8</ecNumber>
    </recommendedName>
    <alternativeName>
        <fullName evidence="1">Polynucleotide phosphorylase</fullName>
        <shortName evidence="1">PNPase</shortName>
    </alternativeName>
</protein>
<evidence type="ECO:0000255" key="1">
    <source>
        <dbReference type="HAMAP-Rule" id="MF_01595"/>
    </source>
</evidence>
<gene>
    <name evidence="1" type="primary">pnp</name>
    <name type="ordered locus">BUsg_361</name>
</gene>
<name>PNP_BUCAP</name>
<comment type="function">
    <text evidence="1">Involved in mRNA degradation. Catalyzes the phosphorolysis of single-stranded polyribonucleotides processively in the 3'- to 5'-direction.</text>
</comment>
<comment type="catalytic activity">
    <reaction evidence="1">
        <text>RNA(n+1) + phosphate = RNA(n) + a ribonucleoside 5'-diphosphate</text>
        <dbReference type="Rhea" id="RHEA:22096"/>
        <dbReference type="Rhea" id="RHEA-COMP:14527"/>
        <dbReference type="Rhea" id="RHEA-COMP:17342"/>
        <dbReference type="ChEBI" id="CHEBI:43474"/>
        <dbReference type="ChEBI" id="CHEBI:57930"/>
        <dbReference type="ChEBI" id="CHEBI:140395"/>
        <dbReference type="EC" id="2.7.7.8"/>
    </reaction>
</comment>
<comment type="cofactor">
    <cofactor evidence="1">
        <name>Mg(2+)</name>
        <dbReference type="ChEBI" id="CHEBI:18420"/>
    </cofactor>
</comment>
<comment type="subunit">
    <text evidence="1">Component of the RNA degradosome, which is a multiprotein complex involved in RNA processing and mRNA degradation.</text>
</comment>
<comment type="subcellular location">
    <subcellularLocation>
        <location evidence="1">Cytoplasm</location>
    </subcellularLocation>
</comment>
<comment type="similarity">
    <text evidence="1">Belongs to the polyribonucleotide nucleotidyltransferase family.</text>
</comment>
<sequence length="707" mass="78389">MLNPIVRKFQYGQHTITLETGIMARQATAAVMASMDDTAVFVTVVGEKTTNSSQKFFPLTVNYQERTYAVGRIPGGFFRREGRPSENEILTARLIDRPIRPLFPKGFCNEIQIIATVVSVNPQINPDIISIIGASAALSLSGIPFYGPIGAARVGFVNNQYVLNPTIDDMKSSFLDLVVSGTQNAVLMVEAESKVLSEDKILGAIMFGHQQQQVVINNIRSLSNEASKLPWIISYPEINTELELKITKLAEKDISNAYLIFNKQERYEKLNFLKEEIIKLFFSENSNIDISEIEDIFEKIEKNIVRKRILNNENRIDGREKDMIRALDIRTGVLPRTHGSSLFTRGETQSLVSVTLGTSRDAQNLDELLGDKTDNFLFHYNFPPYSVGEIGIVGSPKRREIGHGRLAKRSLLAVMPKLDDFPYTIRIVSEITESNGSSSMASVCGASLALMDAGVPIKSAVAGISMGLVKEGDKYVLLSDILGDEDHLGDMDFKVSGTEEGITALQMDIKIEGITNEIMRIALNKAKSARLHILNVMKQALSKPRNEISEFAPRIHKIKINPEKIKDVIGKGGSVIRMLTEETGTIIEIEDDGTIKISATIGEKAKNAIRRIEEITAEIEVGRIYSGKVTRIVDFGAFISIGIGKEGLVHISQISNKRVEKVSDHLTVDQIISVKVLEIDRQGRLRLSIKEVENSIISNKSINNIYI</sequence>
<proteinExistence type="inferred from homology"/>
<organism>
    <name type="scientific">Buchnera aphidicola subsp. Schizaphis graminum (strain Sg)</name>
    <dbReference type="NCBI Taxonomy" id="198804"/>
    <lineage>
        <taxon>Bacteria</taxon>
        <taxon>Pseudomonadati</taxon>
        <taxon>Pseudomonadota</taxon>
        <taxon>Gammaproteobacteria</taxon>
        <taxon>Enterobacterales</taxon>
        <taxon>Erwiniaceae</taxon>
        <taxon>Buchnera</taxon>
    </lineage>
</organism>
<accession>Q8K9H5</accession>